<feature type="chain" id="PRO_0000393864" description="Glycogen synthase kinase 3">
    <location>
        <begin position="1"/>
        <end position="352"/>
    </location>
</feature>
<feature type="domain" description="Protein kinase" evidence="3">
    <location>
        <begin position="20"/>
        <end position="310"/>
    </location>
</feature>
<feature type="active site" description="Proton acceptor" evidence="1 3 4">
    <location>
        <position position="152"/>
    </location>
</feature>
<feature type="binding site" evidence="1 3">
    <location>
        <begin position="26"/>
        <end position="34"/>
    </location>
    <ligand>
        <name>ATP</name>
        <dbReference type="ChEBI" id="CHEBI:30616"/>
    </ligand>
</feature>
<feature type="binding site" evidence="1 3">
    <location>
        <position position="49"/>
    </location>
    <ligand>
        <name>ATP</name>
        <dbReference type="ChEBI" id="CHEBI:30616"/>
    </ligand>
</feature>
<dbReference type="EC" id="2.7.11.26"/>
<dbReference type="EMBL" id="CM000208">
    <property type="protein sequence ID" value="EAN78749.1"/>
    <property type="molecule type" value="Genomic_DNA"/>
</dbReference>
<dbReference type="RefSeq" id="XP_827861.1">
    <property type="nucleotide sequence ID" value="XM_822768.1"/>
</dbReference>
<dbReference type="SMR" id="Q388M1"/>
<dbReference type="FunCoup" id="Q388M1">
    <property type="interactions" value="205"/>
</dbReference>
<dbReference type="STRING" id="185431.Q388M1"/>
<dbReference type="PaxDb" id="5691-EAN78749"/>
<dbReference type="KEGG" id="tbr:Tb10.61.3140"/>
<dbReference type="VEuPathDB" id="TriTrypDB:Tb11.v5.0718"/>
<dbReference type="VEuPathDB" id="TriTrypDB:Tb927.10.13780"/>
<dbReference type="eggNOG" id="KOG0658">
    <property type="taxonomic scope" value="Eukaryota"/>
</dbReference>
<dbReference type="InParanoid" id="Q388M1"/>
<dbReference type="OMA" id="MKTTMPM"/>
<dbReference type="OrthoDB" id="272141at2759"/>
<dbReference type="SABIO-RK" id="Q388M1"/>
<dbReference type="Proteomes" id="UP000008524">
    <property type="component" value="Chromosome 10"/>
</dbReference>
<dbReference type="GO" id="GO:0005930">
    <property type="term" value="C:axoneme"/>
    <property type="evidence" value="ECO:0000314"/>
    <property type="project" value="GeneDB"/>
</dbReference>
<dbReference type="GO" id="GO:0036064">
    <property type="term" value="C:ciliary basal body"/>
    <property type="evidence" value="ECO:0000314"/>
    <property type="project" value="GeneDB"/>
</dbReference>
<dbReference type="GO" id="GO:0097014">
    <property type="term" value="C:ciliary plasm"/>
    <property type="evidence" value="ECO:0000314"/>
    <property type="project" value="GeneDB"/>
</dbReference>
<dbReference type="GO" id="GO:0097542">
    <property type="term" value="C:ciliary tip"/>
    <property type="evidence" value="ECO:0000314"/>
    <property type="project" value="GeneDB"/>
</dbReference>
<dbReference type="GO" id="GO:0005929">
    <property type="term" value="C:cilium"/>
    <property type="evidence" value="ECO:0000314"/>
    <property type="project" value="GeneDB"/>
</dbReference>
<dbReference type="GO" id="GO:0005737">
    <property type="term" value="C:cytoplasm"/>
    <property type="evidence" value="ECO:0000314"/>
    <property type="project" value="GeneDB"/>
</dbReference>
<dbReference type="GO" id="GO:0020023">
    <property type="term" value="C:kinetoplast"/>
    <property type="evidence" value="ECO:0000314"/>
    <property type="project" value="GeneDB"/>
</dbReference>
<dbReference type="GO" id="GO:0031981">
    <property type="term" value="C:nuclear lumen"/>
    <property type="evidence" value="ECO:0000314"/>
    <property type="project" value="GeneDB"/>
</dbReference>
<dbReference type="GO" id="GO:0005634">
    <property type="term" value="C:nucleus"/>
    <property type="evidence" value="ECO:0000314"/>
    <property type="project" value="GeneDB"/>
</dbReference>
<dbReference type="GO" id="GO:0005524">
    <property type="term" value="F:ATP binding"/>
    <property type="evidence" value="ECO:0000255"/>
    <property type="project" value="GeneDB"/>
</dbReference>
<dbReference type="GO" id="GO:0004674">
    <property type="term" value="F:protein serine/threonine kinase activity"/>
    <property type="evidence" value="ECO:0000269"/>
    <property type="project" value="GeneDB"/>
</dbReference>
<dbReference type="GO" id="GO:0050321">
    <property type="term" value="F:tau-protein kinase activity"/>
    <property type="evidence" value="ECO:0000314"/>
    <property type="project" value="UniProtKB"/>
</dbReference>
<dbReference type="GO" id="GO:0030154">
    <property type="term" value="P:cell differentiation"/>
    <property type="evidence" value="ECO:0000318"/>
    <property type="project" value="GO_Central"/>
</dbReference>
<dbReference type="GO" id="GO:0000278">
    <property type="term" value="P:mitotic cell cycle"/>
    <property type="evidence" value="ECO:0000315"/>
    <property type="project" value="GeneDB"/>
</dbReference>
<dbReference type="GO" id="GO:0000281">
    <property type="term" value="P:mitotic cytokinesis"/>
    <property type="evidence" value="ECO:0000315"/>
    <property type="project" value="GeneDB"/>
</dbReference>
<dbReference type="GO" id="GO:0006468">
    <property type="term" value="P:protein phosphorylation"/>
    <property type="evidence" value="ECO:0000314"/>
    <property type="project" value="UniProtKB"/>
</dbReference>
<dbReference type="GO" id="GO:0007165">
    <property type="term" value="P:signal transduction"/>
    <property type="evidence" value="ECO:0000318"/>
    <property type="project" value="GO_Central"/>
</dbReference>
<dbReference type="CDD" id="cd14137">
    <property type="entry name" value="STKc_GSK3"/>
    <property type="match status" value="1"/>
</dbReference>
<dbReference type="FunFam" id="1.10.510.10:FF:000082">
    <property type="entry name" value="Shaggy-related protein kinase kappa"/>
    <property type="match status" value="1"/>
</dbReference>
<dbReference type="Gene3D" id="3.30.200.20">
    <property type="entry name" value="Phosphorylase Kinase, domain 1"/>
    <property type="match status" value="1"/>
</dbReference>
<dbReference type="Gene3D" id="1.10.510.10">
    <property type="entry name" value="Transferase(Phosphotransferase) domain 1"/>
    <property type="match status" value="1"/>
</dbReference>
<dbReference type="InterPro" id="IPR050591">
    <property type="entry name" value="GSK-3"/>
</dbReference>
<dbReference type="InterPro" id="IPR011009">
    <property type="entry name" value="Kinase-like_dom_sf"/>
</dbReference>
<dbReference type="InterPro" id="IPR000719">
    <property type="entry name" value="Prot_kinase_dom"/>
</dbReference>
<dbReference type="InterPro" id="IPR008271">
    <property type="entry name" value="Ser/Thr_kinase_AS"/>
</dbReference>
<dbReference type="InterPro" id="IPR039192">
    <property type="entry name" value="STKc_GSK3"/>
</dbReference>
<dbReference type="PANTHER" id="PTHR24057">
    <property type="entry name" value="GLYCOGEN SYNTHASE KINASE-3 ALPHA"/>
    <property type="match status" value="1"/>
</dbReference>
<dbReference type="PANTHER" id="PTHR24057:SF0">
    <property type="entry name" value="PROTEIN KINASE SHAGGY-RELATED"/>
    <property type="match status" value="1"/>
</dbReference>
<dbReference type="Pfam" id="PF00069">
    <property type="entry name" value="Pkinase"/>
    <property type="match status" value="1"/>
</dbReference>
<dbReference type="SMART" id="SM00220">
    <property type="entry name" value="S_TKc"/>
    <property type="match status" value="1"/>
</dbReference>
<dbReference type="SUPFAM" id="SSF56112">
    <property type="entry name" value="Protein kinase-like (PK-like)"/>
    <property type="match status" value="1"/>
</dbReference>
<dbReference type="PROSITE" id="PS50011">
    <property type="entry name" value="PROTEIN_KINASE_DOM"/>
    <property type="match status" value="1"/>
</dbReference>
<dbReference type="PROSITE" id="PS00108">
    <property type="entry name" value="PROTEIN_KINASE_ST"/>
    <property type="match status" value="1"/>
</dbReference>
<sequence length="352" mass="40321">MSLNLTDAADDRSYKEMEKYTVERVAGQGTFGTVQLARDKSTGSLVAIKKVIQDPRFKNRELQIMQHLARLRHPNIVMLKNYFYTVGGEGRRNDVYLNVVMEFVPETLHRTCRNYYRRMTNPPLILVKVFMFQLLRSIACLHIPVINICHRDIKPHNVLVDEQTGELKLCDFGSAKRLAADEPNVAYICSRYYRAPELIFGNQFYTTAVDIWSVGCIFAEMLLGEPIFCGENTSGQLREIVKILGKPTKEELHKLNGSSTEINANAKATPWENVFKQPLPAEVYDLCGKIFKYVPDQRITPLDALCHPFFNELREPTTKLPSGNPLPAHLYQFTPDEVEAMTEAQREYLLKK</sequence>
<evidence type="ECO:0000250" key="1">
    <source>
        <dbReference type="UniProtKB" id="P28523"/>
    </source>
</evidence>
<evidence type="ECO:0000255" key="2"/>
<evidence type="ECO:0000255" key="3">
    <source>
        <dbReference type="PROSITE-ProRule" id="PRU00159"/>
    </source>
</evidence>
<evidence type="ECO:0000255" key="4">
    <source>
        <dbReference type="PROSITE-ProRule" id="PRU10027"/>
    </source>
</evidence>
<evidence type="ECO:0000269" key="5">
    <source>
    </source>
</evidence>
<evidence type="ECO:0000303" key="6">
    <source>
    </source>
</evidence>
<evidence type="ECO:0000305" key="7"/>
<evidence type="ECO:0000312" key="8">
    <source>
        <dbReference type="EMBL" id="EAN78749.1"/>
    </source>
</evidence>
<evidence type="ECO:0000312" key="9">
    <source>
        <dbReference type="Proteomes" id="UP000008524"/>
    </source>
</evidence>
<organism>
    <name type="scientific">Trypanosoma brucei brucei (strain 927/4 GUTat10.1)</name>
    <dbReference type="NCBI Taxonomy" id="185431"/>
    <lineage>
        <taxon>Eukaryota</taxon>
        <taxon>Discoba</taxon>
        <taxon>Euglenozoa</taxon>
        <taxon>Kinetoplastea</taxon>
        <taxon>Metakinetoplastina</taxon>
        <taxon>Trypanosomatida</taxon>
        <taxon>Trypanosomatidae</taxon>
        <taxon>Trypanosoma</taxon>
    </lineage>
</organism>
<gene>
    <name evidence="6" type="primary">GSK3</name>
    <name type="ORF">Tb927.10.13780</name>
</gene>
<comment type="catalytic activity">
    <reaction evidence="5">
        <text>L-seryl-[tau protein] + ATP = O-phospho-L-seryl-[tau protein] + ADP + H(+)</text>
        <dbReference type="Rhea" id="RHEA:12801"/>
        <dbReference type="Rhea" id="RHEA-COMP:13701"/>
        <dbReference type="Rhea" id="RHEA-COMP:13702"/>
        <dbReference type="ChEBI" id="CHEBI:15378"/>
        <dbReference type="ChEBI" id="CHEBI:29999"/>
        <dbReference type="ChEBI" id="CHEBI:30616"/>
        <dbReference type="ChEBI" id="CHEBI:83421"/>
        <dbReference type="ChEBI" id="CHEBI:456216"/>
        <dbReference type="EC" id="2.7.11.26"/>
    </reaction>
</comment>
<comment type="catalytic activity">
    <reaction evidence="5">
        <text>L-threonyl-[tau protein] + ATP = O-phospho-L-threonyl-[tau protein] + ADP + H(+)</text>
        <dbReference type="Rhea" id="RHEA:53904"/>
        <dbReference type="Rhea" id="RHEA-COMP:13703"/>
        <dbReference type="Rhea" id="RHEA-COMP:13704"/>
        <dbReference type="ChEBI" id="CHEBI:15378"/>
        <dbReference type="ChEBI" id="CHEBI:30013"/>
        <dbReference type="ChEBI" id="CHEBI:30616"/>
        <dbReference type="ChEBI" id="CHEBI:61977"/>
        <dbReference type="ChEBI" id="CHEBI:456216"/>
        <dbReference type="EC" id="2.7.11.26"/>
    </reaction>
</comment>
<comment type="biophysicochemical properties">
    <kinetics>
        <KM evidence="5">4.5 uM for ATP</KM>
    </kinetics>
</comment>
<comment type="subunit">
    <text evidence="5">Inhibited by cyclin kinase 2 (CDK2) inhibitors, including GW8510.</text>
</comment>
<comment type="miscellaneous">
    <text evidence="5">Was identified as a drug target for the treatment of African sleeping sickness. RNA interference leads to growth arrest and altered parasite morphology, demonstrating requirement for cell survival.</text>
</comment>
<comment type="similarity">
    <text evidence="2">Belongs to the protein kinase superfamily. CMGC Ser/Thr protein kinase family. GSK-3 subfamily.</text>
</comment>
<proteinExistence type="evidence at protein level"/>
<protein>
    <recommendedName>
        <fullName evidence="6">Glycogen synthase kinase 3</fullName>
        <shortName evidence="6">GSK-3 short</shortName>
        <ecNumber>2.7.11.26</ecNumber>
    </recommendedName>
</protein>
<accession>Q388M1</accession>
<keyword id="KW-0067">ATP-binding</keyword>
<keyword id="KW-0418">Kinase</keyword>
<keyword id="KW-0547">Nucleotide-binding</keyword>
<keyword id="KW-1185">Reference proteome</keyword>
<keyword id="KW-0723">Serine/threonine-protein kinase</keyword>
<keyword id="KW-0808">Transferase</keyword>
<name>GSK3B_TRYB2</name>
<reference evidence="8" key="1">
    <citation type="journal article" date="2005" name="Science">
        <title>The genome of the African trypanosome Trypanosoma brucei.</title>
        <authorList>
            <person name="Berriman M."/>
            <person name="Ghedin E."/>
            <person name="Hertz-Fowler C."/>
            <person name="Blandin G."/>
            <person name="Renauld H."/>
            <person name="Bartholomeu D.C."/>
            <person name="Lennard N.J."/>
            <person name="Caler E."/>
            <person name="Hamlin N.E."/>
            <person name="Haas B."/>
            <person name="Bohme U."/>
            <person name="Hannick L."/>
            <person name="Aslett M.A."/>
            <person name="Shallom J."/>
            <person name="Marcello L."/>
            <person name="Hou L."/>
            <person name="Wickstead B."/>
            <person name="Alsmark U.C.M."/>
            <person name="Arrowsmith C."/>
            <person name="Atkin R.J."/>
            <person name="Barron A.J."/>
            <person name="Bringaud F."/>
            <person name="Brooks K."/>
            <person name="Carrington M."/>
            <person name="Cherevach I."/>
            <person name="Chillingworth T.J."/>
            <person name="Churcher C."/>
            <person name="Clark L.N."/>
            <person name="Corton C.H."/>
            <person name="Cronin A."/>
            <person name="Davies R.M."/>
            <person name="Doggett J."/>
            <person name="Djikeng A."/>
            <person name="Feldblyum T."/>
            <person name="Field M.C."/>
            <person name="Fraser A."/>
            <person name="Goodhead I."/>
            <person name="Hance Z."/>
            <person name="Harper D."/>
            <person name="Harris B.R."/>
            <person name="Hauser H."/>
            <person name="Hostetler J."/>
            <person name="Ivens A."/>
            <person name="Jagels K."/>
            <person name="Johnson D."/>
            <person name="Johnson J."/>
            <person name="Jones K."/>
            <person name="Kerhornou A.X."/>
            <person name="Koo H."/>
            <person name="Larke N."/>
            <person name="Landfear S."/>
            <person name="Larkin C."/>
            <person name="Leech V."/>
            <person name="Line A."/>
            <person name="Lord A."/>
            <person name="Macleod A."/>
            <person name="Mooney P.J."/>
            <person name="Moule S."/>
            <person name="Martin D.M."/>
            <person name="Morgan G.W."/>
            <person name="Mungall K."/>
            <person name="Norbertczak H."/>
            <person name="Ormond D."/>
            <person name="Pai G."/>
            <person name="Peacock C.S."/>
            <person name="Peterson J."/>
            <person name="Quail M.A."/>
            <person name="Rabbinowitsch E."/>
            <person name="Rajandream M.A."/>
            <person name="Reitter C."/>
            <person name="Salzberg S.L."/>
            <person name="Sanders M."/>
            <person name="Schobel S."/>
            <person name="Sharp S."/>
            <person name="Simmonds M."/>
            <person name="Simpson A.J."/>
            <person name="Tallon L."/>
            <person name="Turner C.M."/>
            <person name="Tait A."/>
            <person name="Tivey A.R."/>
            <person name="Van Aken S."/>
            <person name="Walker D."/>
            <person name="Wanless D."/>
            <person name="Wang S."/>
            <person name="White B."/>
            <person name="White O."/>
            <person name="Whitehead S."/>
            <person name="Woodward J."/>
            <person name="Wortman J."/>
            <person name="Adams M.D."/>
            <person name="Embley T.M."/>
            <person name="Gull K."/>
            <person name="Ullu E."/>
            <person name="Barry J.D."/>
            <person name="Fairlamb A.H."/>
            <person name="Opperdoes F."/>
            <person name="Barrell B.G."/>
            <person name="Donelson J.E."/>
            <person name="Hall N."/>
            <person name="Fraser C.M."/>
            <person name="Melville S.E."/>
            <person name="El-Sayed N.M.A."/>
        </authorList>
    </citation>
    <scope>NUCLEOTIDE SEQUENCE [LARGE SCALE GENOMIC DNA]</scope>
    <source>
        <strain evidence="9">927/4 GUTat10.1</strain>
    </source>
</reference>
<reference evidence="7" key="2">
    <citation type="journal article" date="2008" name="Antimicrob. Agents Chemother.">
        <title>Glycogen synthase kinase 3 is a potential drug target for African trypanosomiasis therapy.</title>
        <authorList>
            <person name="Ojo K.K."/>
            <person name="Gillespie J.R."/>
            <person name="Riechers A.J."/>
            <person name="Napuli A.J."/>
            <person name="Verlinde C.L."/>
            <person name="Buckner F.S."/>
            <person name="Gelb M.H."/>
            <person name="Domostoj M.M."/>
            <person name="Wells S.J."/>
            <person name="Scheer A."/>
            <person name="Wells T.N."/>
            <person name="Van Voorhis W.C."/>
        </authorList>
    </citation>
    <scope>CATALYTIC ACTIVITY</scope>
    <scope>BIOPHYSICOCHEMICAL PROPERTIES</scope>
    <scope>INHIBITION BY DRUGS</scope>
    <scope>IDENTIFICATION AS A DRUG TARGET</scope>
    <source>
        <strain>427</strain>
    </source>
</reference>